<evidence type="ECO:0000255" key="1">
    <source>
        <dbReference type="HAMAP-Rule" id="MF_01380"/>
    </source>
</evidence>
<name>ERPA_ESCF3</name>
<comment type="function">
    <text evidence="1">Required for insertion of 4Fe-4S clusters for at least IspG.</text>
</comment>
<comment type="cofactor">
    <cofactor evidence="1">
        <name>iron-sulfur cluster</name>
        <dbReference type="ChEBI" id="CHEBI:30408"/>
    </cofactor>
    <text evidence="1">Binds 1 iron-sulfur cluster per subunit.</text>
</comment>
<comment type="subunit">
    <text evidence="1">Homodimer.</text>
</comment>
<comment type="similarity">
    <text evidence="1">Belongs to the HesB/IscA family.</text>
</comment>
<keyword id="KW-0408">Iron</keyword>
<keyword id="KW-0411">Iron-sulfur</keyword>
<keyword id="KW-0479">Metal-binding</keyword>
<feature type="chain" id="PRO_1000144919" description="Iron-sulfur cluster insertion protein ErpA">
    <location>
        <begin position="1"/>
        <end position="114"/>
    </location>
</feature>
<feature type="binding site" evidence="1">
    <location>
        <position position="42"/>
    </location>
    <ligand>
        <name>iron-sulfur cluster</name>
        <dbReference type="ChEBI" id="CHEBI:30408"/>
    </ligand>
</feature>
<feature type="binding site" evidence="1">
    <location>
        <position position="106"/>
    </location>
    <ligand>
        <name>iron-sulfur cluster</name>
        <dbReference type="ChEBI" id="CHEBI:30408"/>
    </ligand>
</feature>
<feature type="binding site" evidence="1">
    <location>
        <position position="108"/>
    </location>
    <ligand>
        <name>iron-sulfur cluster</name>
        <dbReference type="ChEBI" id="CHEBI:30408"/>
    </ligand>
</feature>
<sequence length="114" mass="12100">MSDDVALPLEFTDAAANKVKSLIADEDNPNLKLRVYITGGGCSGFQYGFTFDDQVNEGDMTIEKQGVGLVVDPMSLQYLVGGSVDYTEGLEGSRFIVTNPNAKSTCGCGSSFSI</sequence>
<protein>
    <recommendedName>
        <fullName evidence="1">Iron-sulfur cluster insertion protein ErpA</fullName>
    </recommendedName>
</protein>
<accession>B7LWB7</accession>
<gene>
    <name evidence="1" type="primary">erpA</name>
    <name type="ordered locus">EFER_0179</name>
</gene>
<dbReference type="EMBL" id="CU928158">
    <property type="protein sequence ID" value="CAQ87760.1"/>
    <property type="molecule type" value="Genomic_DNA"/>
</dbReference>
<dbReference type="RefSeq" id="WP_001295564.1">
    <property type="nucleotide sequence ID" value="NC_011740.1"/>
</dbReference>
<dbReference type="SMR" id="B7LWB7"/>
<dbReference type="GeneID" id="93777270"/>
<dbReference type="KEGG" id="efe:EFER_0179"/>
<dbReference type="HOGENOM" id="CLU_069054_5_3_6"/>
<dbReference type="OrthoDB" id="9801228at2"/>
<dbReference type="Proteomes" id="UP000000745">
    <property type="component" value="Chromosome"/>
</dbReference>
<dbReference type="GO" id="GO:0005829">
    <property type="term" value="C:cytosol"/>
    <property type="evidence" value="ECO:0007669"/>
    <property type="project" value="TreeGrafter"/>
</dbReference>
<dbReference type="GO" id="GO:0051537">
    <property type="term" value="F:2 iron, 2 sulfur cluster binding"/>
    <property type="evidence" value="ECO:0007669"/>
    <property type="project" value="UniProtKB-ARBA"/>
</dbReference>
<dbReference type="GO" id="GO:0051539">
    <property type="term" value="F:4 iron, 4 sulfur cluster binding"/>
    <property type="evidence" value="ECO:0007669"/>
    <property type="project" value="TreeGrafter"/>
</dbReference>
<dbReference type="GO" id="GO:0005506">
    <property type="term" value="F:iron ion binding"/>
    <property type="evidence" value="ECO:0007669"/>
    <property type="project" value="UniProtKB-UniRule"/>
</dbReference>
<dbReference type="GO" id="GO:0016226">
    <property type="term" value="P:iron-sulfur cluster assembly"/>
    <property type="evidence" value="ECO:0007669"/>
    <property type="project" value="UniProtKB-UniRule"/>
</dbReference>
<dbReference type="FunFam" id="2.60.300.12:FF:000002">
    <property type="entry name" value="Iron-sulfur cluster insertion protein ErpA"/>
    <property type="match status" value="1"/>
</dbReference>
<dbReference type="Gene3D" id="2.60.300.12">
    <property type="entry name" value="HesB-like domain"/>
    <property type="match status" value="1"/>
</dbReference>
<dbReference type="HAMAP" id="MF_01380">
    <property type="entry name" value="Fe_S_insert_ErpA"/>
    <property type="match status" value="1"/>
</dbReference>
<dbReference type="InterPro" id="IPR000361">
    <property type="entry name" value="FeS_biogenesis"/>
</dbReference>
<dbReference type="InterPro" id="IPR016092">
    <property type="entry name" value="FeS_cluster_insertion"/>
</dbReference>
<dbReference type="InterPro" id="IPR017870">
    <property type="entry name" value="FeS_cluster_insertion_CS"/>
</dbReference>
<dbReference type="InterPro" id="IPR023063">
    <property type="entry name" value="FeS_cluster_insertion_RrpA"/>
</dbReference>
<dbReference type="InterPro" id="IPR035903">
    <property type="entry name" value="HesB-like_dom_sf"/>
</dbReference>
<dbReference type="NCBIfam" id="TIGR00049">
    <property type="entry name" value="iron-sulfur cluster assembly accessory protein"/>
    <property type="match status" value="1"/>
</dbReference>
<dbReference type="NCBIfam" id="NF010147">
    <property type="entry name" value="PRK13623.1"/>
    <property type="match status" value="1"/>
</dbReference>
<dbReference type="PANTHER" id="PTHR43011">
    <property type="entry name" value="IRON-SULFUR CLUSTER ASSEMBLY 2 HOMOLOG, MITOCHONDRIAL"/>
    <property type="match status" value="1"/>
</dbReference>
<dbReference type="PANTHER" id="PTHR43011:SF1">
    <property type="entry name" value="IRON-SULFUR CLUSTER ASSEMBLY 2 HOMOLOG, MITOCHONDRIAL"/>
    <property type="match status" value="1"/>
</dbReference>
<dbReference type="Pfam" id="PF01521">
    <property type="entry name" value="Fe-S_biosyn"/>
    <property type="match status" value="1"/>
</dbReference>
<dbReference type="SUPFAM" id="SSF89360">
    <property type="entry name" value="HesB-like domain"/>
    <property type="match status" value="1"/>
</dbReference>
<dbReference type="PROSITE" id="PS01152">
    <property type="entry name" value="HESB"/>
    <property type="match status" value="1"/>
</dbReference>
<reference key="1">
    <citation type="journal article" date="2009" name="PLoS Genet.">
        <title>Organised genome dynamics in the Escherichia coli species results in highly diverse adaptive paths.</title>
        <authorList>
            <person name="Touchon M."/>
            <person name="Hoede C."/>
            <person name="Tenaillon O."/>
            <person name="Barbe V."/>
            <person name="Baeriswyl S."/>
            <person name="Bidet P."/>
            <person name="Bingen E."/>
            <person name="Bonacorsi S."/>
            <person name="Bouchier C."/>
            <person name="Bouvet O."/>
            <person name="Calteau A."/>
            <person name="Chiapello H."/>
            <person name="Clermont O."/>
            <person name="Cruveiller S."/>
            <person name="Danchin A."/>
            <person name="Diard M."/>
            <person name="Dossat C."/>
            <person name="Karoui M.E."/>
            <person name="Frapy E."/>
            <person name="Garry L."/>
            <person name="Ghigo J.M."/>
            <person name="Gilles A.M."/>
            <person name="Johnson J."/>
            <person name="Le Bouguenec C."/>
            <person name="Lescat M."/>
            <person name="Mangenot S."/>
            <person name="Martinez-Jehanne V."/>
            <person name="Matic I."/>
            <person name="Nassif X."/>
            <person name="Oztas S."/>
            <person name="Petit M.A."/>
            <person name="Pichon C."/>
            <person name="Rouy Z."/>
            <person name="Ruf C.S."/>
            <person name="Schneider D."/>
            <person name="Tourret J."/>
            <person name="Vacherie B."/>
            <person name="Vallenet D."/>
            <person name="Medigue C."/>
            <person name="Rocha E.P.C."/>
            <person name="Denamur E."/>
        </authorList>
    </citation>
    <scope>NUCLEOTIDE SEQUENCE [LARGE SCALE GENOMIC DNA]</scope>
    <source>
        <strain>ATCC 35469 / DSM 13698 / BCRC 15582 / CCUG 18766 / IAM 14443 / JCM 21226 / LMG 7866 / NBRC 102419 / NCTC 12128 / CDC 0568-73</strain>
    </source>
</reference>
<proteinExistence type="inferred from homology"/>
<organism>
    <name type="scientific">Escherichia fergusonii (strain ATCC 35469 / DSM 13698 / CCUG 18766 / IAM 14443 / JCM 21226 / LMG 7866 / NBRC 102419 / NCTC 12128 / CDC 0568-73)</name>
    <dbReference type="NCBI Taxonomy" id="585054"/>
    <lineage>
        <taxon>Bacteria</taxon>
        <taxon>Pseudomonadati</taxon>
        <taxon>Pseudomonadota</taxon>
        <taxon>Gammaproteobacteria</taxon>
        <taxon>Enterobacterales</taxon>
        <taxon>Enterobacteriaceae</taxon>
        <taxon>Escherichia</taxon>
    </lineage>
</organism>